<protein>
    <recommendedName>
        <fullName>Ras-like protein 1</fullName>
        <ecNumber evidence="2">3.6.5.2</ecNumber>
    </recommendedName>
    <alternativeName>
        <fullName>Ras homolog type B</fullName>
    </alternativeName>
</protein>
<organism>
    <name type="scientific">Candida albicans (strain WO-1)</name>
    <name type="common">Yeast</name>
    <dbReference type="NCBI Taxonomy" id="294748"/>
    <lineage>
        <taxon>Eukaryota</taxon>
        <taxon>Fungi</taxon>
        <taxon>Dikarya</taxon>
        <taxon>Ascomycota</taxon>
        <taxon>Saccharomycotina</taxon>
        <taxon>Pichiomycetes</taxon>
        <taxon>Debaryomycetaceae</taxon>
        <taxon>Candida/Lodderomyces clade</taxon>
        <taxon>Candida</taxon>
    </lineage>
</organism>
<reference key="1">
    <citation type="journal article" date="2001" name="Mol. Microbiol.">
        <title>Ras links cellular morphogenesis to virulence by regulation of the MAP kinase and cAMP signalling pathways in the pathogenic fungus Candida albicans.</title>
        <authorList>
            <person name="Leberer E."/>
            <person name="Harcus D."/>
            <person name="Dignard D."/>
            <person name="Johnson L."/>
            <person name="Ushinsky S."/>
            <person name="Thomas D.Y."/>
            <person name="Schroeppel K."/>
        </authorList>
    </citation>
    <scope>NUCLEOTIDE SEQUENCE [GENOMIC DNA]</scope>
    <scope>VARIANTS ASN-216 INS AND GLN-SER-251 INS</scope>
    <scope>FUNCTION</scope>
    <source>
        <strain>WO-1</strain>
    </source>
</reference>
<reference key="2">
    <citation type="journal article" date="2009" name="Nature">
        <title>Evolution of pathogenicity and sexual reproduction in eight Candida genomes.</title>
        <authorList>
            <person name="Butler G."/>
            <person name="Rasmussen M.D."/>
            <person name="Lin M.F."/>
            <person name="Santos M.A.S."/>
            <person name="Sakthikumar S."/>
            <person name="Munro C.A."/>
            <person name="Rheinbay E."/>
            <person name="Grabherr M."/>
            <person name="Forche A."/>
            <person name="Reedy J.L."/>
            <person name="Agrafioti I."/>
            <person name="Arnaud M.B."/>
            <person name="Bates S."/>
            <person name="Brown A.J.P."/>
            <person name="Brunke S."/>
            <person name="Costanzo M.C."/>
            <person name="Fitzpatrick D.A."/>
            <person name="de Groot P.W.J."/>
            <person name="Harris D."/>
            <person name="Hoyer L.L."/>
            <person name="Hube B."/>
            <person name="Klis F.M."/>
            <person name="Kodira C."/>
            <person name="Lennard N."/>
            <person name="Logue M.E."/>
            <person name="Martin R."/>
            <person name="Neiman A.M."/>
            <person name="Nikolaou E."/>
            <person name="Quail M.A."/>
            <person name="Quinn J."/>
            <person name="Santos M.C."/>
            <person name="Schmitzberger F.F."/>
            <person name="Sherlock G."/>
            <person name="Shah P."/>
            <person name="Silverstein K.A.T."/>
            <person name="Skrzypek M.S."/>
            <person name="Soll D."/>
            <person name="Staggs R."/>
            <person name="Stansfield I."/>
            <person name="Stumpf M.P.H."/>
            <person name="Sudbery P.E."/>
            <person name="Srikantha T."/>
            <person name="Zeng Q."/>
            <person name="Berman J."/>
            <person name="Berriman M."/>
            <person name="Heitman J."/>
            <person name="Gow N.A.R."/>
            <person name="Lorenz M.C."/>
            <person name="Birren B.W."/>
            <person name="Kellis M."/>
            <person name="Cuomo C.A."/>
        </authorList>
    </citation>
    <scope>NUCLEOTIDE SEQUENCE [LARGE SCALE GENOMIC DNA]</scope>
    <source>
        <strain>WO-1</strain>
    </source>
</reference>
<keyword id="KW-1003">Cell membrane</keyword>
<keyword id="KW-0342">GTP-binding</keyword>
<keyword id="KW-0378">Hydrolase</keyword>
<keyword id="KW-0449">Lipoprotein</keyword>
<keyword id="KW-0472">Membrane</keyword>
<keyword id="KW-0488">Methylation</keyword>
<keyword id="KW-0547">Nucleotide-binding</keyword>
<keyword id="KW-0564">Palmitate</keyword>
<keyword id="KW-0636">Prenylation</keyword>
<gene>
    <name type="primary">RAS1</name>
    <name type="ORF">CAWG_06092</name>
</gene>
<evidence type="ECO:0000250" key="1"/>
<evidence type="ECO:0000250" key="2">
    <source>
        <dbReference type="UniProtKB" id="P01112"/>
    </source>
</evidence>
<evidence type="ECO:0000256" key="3">
    <source>
        <dbReference type="SAM" id="MobiDB-lite"/>
    </source>
</evidence>
<evidence type="ECO:0000269" key="4">
    <source>
    </source>
</evidence>
<evidence type="ECO:0000305" key="5"/>
<feature type="chain" id="PRO_0000413060" description="Ras-like protein 1">
    <location>
        <begin position="1"/>
        <end position="285"/>
    </location>
</feature>
<feature type="propeptide" id="PRO_0000413061" description="Removed in mature form" evidence="1">
    <location>
        <begin position="286"/>
        <end position="288"/>
    </location>
</feature>
<feature type="region of interest" description="Disordered" evidence="3">
    <location>
        <begin position="176"/>
        <end position="288"/>
    </location>
</feature>
<feature type="short sequence motif" description="Effector region">
    <location>
        <begin position="33"/>
        <end position="41"/>
    </location>
</feature>
<feature type="compositionally biased region" description="Low complexity" evidence="3">
    <location>
        <begin position="178"/>
        <end position="216"/>
    </location>
</feature>
<feature type="compositionally biased region" description="Low complexity" evidence="3">
    <location>
        <begin position="246"/>
        <end position="281"/>
    </location>
</feature>
<feature type="binding site" evidence="1">
    <location>
        <begin position="11"/>
        <end position="18"/>
    </location>
    <ligand>
        <name>GTP</name>
        <dbReference type="ChEBI" id="CHEBI:37565"/>
    </ligand>
</feature>
<feature type="binding site" evidence="1">
    <location>
        <begin position="58"/>
        <end position="62"/>
    </location>
    <ligand>
        <name>GTP</name>
        <dbReference type="ChEBI" id="CHEBI:37565"/>
    </ligand>
</feature>
<feature type="binding site" evidence="1">
    <location>
        <begin position="117"/>
        <end position="120"/>
    </location>
    <ligand>
        <name>GTP</name>
        <dbReference type="ChEBI" id="CHEBI:37565"/>
    </ligand>
</feature>
<feature type="modified residue" description="Cysteine methyl ester" evidence="1">
    <location>
        <position position="285"/>
    </location>
</feature>
<feature type="lipid moiety-binding region" description="S-palmitoyl cysteine" evidence="1">
    <location>
        <position position="284"/>
    </location>
</feature>
<feature type="lipid moiety-binding region" description="S-farnesyl cysteine" evidence="1">
    <location>
        <position position="285"/>
    </location>
</feature>
<feature type="sequence variant" description="In allele A." evidence="4">
    <original>N</original>
    <variation>NN</variation>
    <location>
        <position position="216"/>
    </location>
</feature>
<feature type="sequence variant" description="In allele B.">
    <original>S</original>
    <variation>SQS</variation>
    <location>
        <position position="251"/>
    </location>
</feature>
<proteinExistence type="inferred from homology"/>
<sequence>MLREYKLVVVGGGGVGKSALTIQLIQSHFVDEYDPTIEDSYRKQCTIDDQQVLLDVLDTAGQEEYSAMREQYMRTGEGFLLVYSINSLNSFQELNSFYDQILRVKDSDNVPVLVVGNKCDLEMERQVSYEDGLALANSFNCPFLETSAKQRINVEEAFYGLVRNINQYNAKIAEAEKQQQQQQQQQNANQQGQDQYGQQKDNQQSQFNNQINNNNNTSAVNGGVSSDGIIDQNGNGGVSSGQANLPNQSQSQRQQQQQQQEPQQQSENQFSGQKQSSSKSKNGCCVIV</sequence>
<comment type="function">
    <text evidence="4">Required for the regulation of both a MAP kinase signaling pathway and a cAMP signaling pathway. The activation of these pathways contributes to the pathogenicity of the cells through the induction of the morphological transition from the yeast to the polarized filamentous form.</text>
</comment>
<comment type="catalytic activity">
    <reaction evidence="2">
        <text>GTP + H2O = GDP + phosphate + H(+)</text>
        <dbReference type="Rhea" id="RHEA:19669"/>
        <dbReference type="ChEBI" id="CHEBI:15377"/>
        <dbReference type="ChEBI" id="CHEBI:15378"/>
        <dbReference type="ChEBI" id="CHEBI:37565"/>
        <dbReference type="ChEBI" id="CHEBI:43474"/>
        <dbReference type="ChEBI" id="CHEBI:58189"/>
        <dbReference type="EC" id="3.6.5.2"/>
    </reaction>
</comment>
<comment type="activity regulation">
    <text>Alternates between an inactive form bound to GDP and an active form bound to GTP. Activated by a guanine nucleotide-exchange factor (GEF) and inactivated by a GTPase-activating protein (GAP).</text>
</comment>
<comment type="subcellular location">
    <subcellularLocation>
        <location evidence="5">Cell membrane</location>
        <topology evidence="5">Lipid-anchor</topology>
        <orientation evidence="5">Cytoplasmic side</orientation>
    </subcellularLocation>
</comment>
<comment type="similarity">
    <text evidence="5">Belongs to the small GTPase superfamily. Ras family.</text>
</comment>
<accession>C4YKT4</accession>
<accession>Q9UQX7</accession>
<accession>Q9UVU4</accession>
<name>RAS1_CANAW</name>
<dbReference type="EC" id="3.6.5.2" evidence="2"/>
<dbReference type="EMBL" id="AF134251">
    <property type="protein sequence ID" value="AAF03566.1"/>
    <property type="molecule type" value="Genomic_DNA"/>
</dbReference>
<dbReference type="EMBL" id="AF134252">
    <property type="protein sequence ID" value="AAF03567.1"/>
    <property type="molecule type" value="Genomic_DNA"/>
</dbReference>
<dbReference type="EMBL" id="CH672354">
    <property type="protein sequence ID" value="EEQ47513.1"/>
    <property type="molecule type" value="Genomic_DNA"/>
</dbReference>
<dbReference type="SMR" id="C4YKT4"/>
<dbReference type="PaxDb" id="5476-C4YKT4"/>
<dbReference type="VEuPathDB" id="FungiDB:CAWG_06092"/>
<dbReference type="HOGENOM" id="CLU_041217_9_0_1"/>
<dbReference type="OMA" id="CEFTEAS"/>
<dbReference type="OrthoDB" id="20995at766764"/>
<dbReference type="PHI-base" id="PHI:507"/>
<dbReference type="Proteomes" id="UP000001429">
    <property type="component" value="Chromosome 2, Supercontig 1.9"/>
</dbReference>
<dbReference type="GO" id="GO:0005886">
    <property type="term" value="C:plasma membrane"/>
    <property type="evidence" value="ECO:0007669"/>
    <property type="project" value="UniProtKB-SubCell"/>
</dbReference>
<dbReference type="GO" id="GO:0003925">
    <property type="term" value="F:G protein activity"/>
    <property type="evidence" value="ECO:0007669"/>
    <property type="project" value="UniProtKB-EC"/>
</dbReference>
<dbReference type="GO" id="GO:0005525">
    <property type="term" value="F:GTP binding"/>
    <property type="evidence" value="ECO:0007669"/>
    <property type="project" value="UniProtKB-KW"/>
</dbReference>
<dbReference type="GO" id="GO:0007165">
    <property type="term" value="P:signal transduction"/>
    <property type="evidence" value="ECO:0007669"/>
    <property type="project" value="InterPro"/>
</dbReference>
<dbReference type="FunFam" id="3.40.50.300:FF:000080">
    <property type="entry name" value="Ras-like GTPase Ras1"/>
    <property type="match status" value="1"/>
</dbReference>
<dbReference type="Gene3D" id="3.40.50.300">
    <property type="entry name" value="P-loop containing nucleotide triphosphate hydrolases"/>
    <property type="match status" value="1"/>
</dbReference>
<dbReference type="InterPro" id="IPR027417">
    <property type="entry name" value="P-loop_NTPase"/>
</dbReference>
<dbReference type="InterPro" id="IPR005225">
    <property type="entry name" value="Small_GTP-bd"/>
</dbReference>
<dbReference type="InterPro" id="IPR001806">
    <property type="entry name" value="Small_GTPase"/>
</dbReference>
<dbReference type="InterPro" id="IPR020849">
    <property type="entry name" value="Small_GTPase_Ras-type"/>
</dbReference>
<dbReference type="NCBIfam" id="TIGR00231">
    <property type="entry name" value="small_GTP"/>
    <property type="match status" value="1"/>
</dbReference>
<dbReference type="PANTHER" id="PTHR24070">
    <property type="entry name" value="RAS, DI-RAS, AND RHEB FAMILY MEMBERS OF SMALL GTPASE SUPERFAMILY"/>
    <property type="match status" value="1"/>
</dbReference>
<dbReference type="Pfam" id="PF00071">
    <property type="entry name" value="Ras"/>
    <property type="match status" value="1"/>
</dbReference>
<dbReference type="PRINTS" id="PR00449">
    <property type="entry name" value="RASTRNSFRMNG"/>
</dbReference>
<dbReference type="SMART" id="SM00175">
    <property type="entry name" value="RAB"/>
    <property type="match status" value="1"/>
</dbReference>
<dbReference type="SMART" id="SM00176">
    <property type="entry name" value="RAN"/>
    <property type="match status" value="1"/>
</dbReference>
<dbReference type="SMART" id="SM00173">
    <property type="entry name" value="RAS"/>
    <property type="match status" value="1"/>
</dbReference>
<dbReference type="SMART" id="SM00174">
    <property type="entry name" value="RHO"/>
    <property type="match status" value="1"/>
</dbReference>
<dbReference type="SUPFAM" id="SSF52540">
    <property type="entry name" value="P-loop containing nucleoside triphosphate hydrolases"/>
    <property type="match status" value="1"/>
</dbReference>
<dbReference type="PROSITE" id="PS51421">
    <property type="entry name" value="RAS"/>
    <property type="match status" value="1"/>
</dbReference>